<comment type="function">
    <text evidence="1">High-affinity epithelial cell surface receptor for APF.</text>
</comment>
<comment type="function">
    <text evidence="1">Mediates the anchoring of the endoplasmic reticulum to microtubules.</text>
</comment>
<comment type="subunit">
    <text evidence="5">Interacts with REEP5.</text>
</comment>
<comment type="subcellular location">
    <subcellularLocation>
        <location evidence="5">Endoplasmic reticulum membrane</location>
        <topology evidence="6">Single-pass type II membrane protein</topology>
    </subcellularLocation>
    <subcellularLocation>
        <location evidence="2">Cell membrane</location>
        <topology evidence="6">Single-pass type II membrane protein</topology>
    </subcellularLocation>
    <subcellularLocation>
        <location>Cytoplasm</location>
        <location>Cytoskeleton</location>
    </subcellularLocation>
    <subcellularLocation>
        <location>Cytoplasm</location>
        <location>Perinuclear region</location>
    </subcellularLocation>
    <text evidence="1">Translocates to the perinuclear region upon APF-stimulation.</text>
</comment>
<comment type="tissue specificity">
    <text evidence="5">Expressed in cardiomyocytes (at protein level).</text>
</comment>
<comment type="PTM">
    <text evidence="1">Reversibly palmitoylated. Palmitoylation at Cys-79 by DHHC2 is required for its trafficking from the ER to the plasma membrane and for its perinuclear localization (By similarity).</text>
</comment>
<comment type="PTM">
    <text evidence="1">Increased phosphorylation during mitosis prevents binding to microtubules.</text>
</comment>
<comment type="sequence caution" evidence="6">
    <conflict type="erroneous initiation">
        <sequence resource="EMBL-CDS" id="AAH25522"/>
    </conflict>
    <text>Extended N-terminus.</text>
</comment>
<comment type="sequence caution" evidence="6">
    <conflict type="miscellaneous discrepancy">
        <sequence resource="EMBL-CDS" id="AAH25522"/>
    </conflict>
    <text>Contaminating sequence. Vector contamination at the N-terminus.</text>
</comment>
<comment type="sequence caution" evidence="6">
    <conflict type="erroneous initiation">
        <sequence resource="EMBL-CDS" id="BAC41005"/>
    </conflict>
</comment>
<accession>Q8BMK4</accession>
<accession>B2RRB4</accession>
<accession>Q8BTK8</accession>
<accession>Q8R3F2</accession>
<protein>
    <recommendedName>
        <fullName>Cytoskeleton-associated protein 4</fullName>
    </recommendedName>
    <alternativeName>
        <fullName>63-kDa cytoskeleton-linking membrane protein</fullName>
        <shortName>Climp-63</shortName>
        <shortName>p63</shortName>
    </alternativeName>
</protein>
<name>CKAP4_MOUSE</name>
<reference key="1">
    <citation type="journal article" date="2009" name="PLoS Biol.">
        <title>Lineage-specific biology revealed by a finished genome assembly of the mouse.</title>
        <authorList>
            <person name="Church D.M."/>
            <person name="Goodstadt L."/>
            <person name="Hillier L.W."/>
            <person name="Zody M.C."/>
            <person name="Goldstein S."/>
            <person name="She X."/>
            <person name="Bult C.J."/>
            <person name="Agarwala R."/>
            <person name="Cherry J.L."/>
            <person name="DiCuccio M."/>
            <person name="Hlavina W."/>
            <person name="Kapustin Y."/>
            <person name="Meric P."/>
            <person name="Maglott D."/>
            <person name="Birtle Z."/>
            <person name="Marques A.C."/>
            <person name="Graves T."/>
            <person name="Zhou S."/>
            <person name="Teague B."/>
            <person name="Potamousis K."/>
            <person name="Churas C."/>
            <person name="Place M."/>
            <person name="Herschleb J."/>
            <person name="Runnheim R."/>
            <person name="Forrest D."/>
            <person name="Amos-Landgraf J."/>
            <person name="Schwartz D.C."/>
            <person name="Cheng Z."/>
            <person name="Lindblad-Toh K."/>
            <person name="Eichler E.E."/>
            <person name="Ponting C.P."/>
        </authorList>
    </citation>
    <scope>NUCLEOTIDE SEQUENCE [LARGE SCALE GENOMIC DNA]</scope>
    <source>
        <strain>C57BL/6J</strain>
    </source>
</reference>
<reference key="2">
    <citation type="journal article" date="2004" name="Genome Res.">
        <title>The status, quality, and expansion of the NIH full-length cDNA project: the Mammalian Gene Collection (MGC).</title>
        <authorList>
            <consortium name="The MGC Project Team"/>
        </authorList>
    </citation>
    <scope>NUCLEOTIDE SEQUENCE [LARGE SCALE MRNA]</scope>
    <source>
        <strain>FVB/N</strain>
        <tissue>Brain</tissue>
        <tissue>Mammary tumor</tissue>
    </source>
</reference>
<reference key="3">
    <citation type="journal article" date="2005" name="Science">
        <title>The transcriptional landscape of the mammalian genome.</title>
        <authorList>
            <person name="Carninci P."/>
            <person name="Kasukawa T."/>
            <person name="Katayama S."/>
            <person name="Gough J."/>
            <person name="Frith M.C."/>
            <person name="Maeda N."/>
            <person name="Oyama R."/>
            <person name="Ravasi T."/>
            <person name="Lenhard B."/>
            <person name="Wells C."/>
            <person name="Kodzius R."/>
            <person name="Shimokawa K."/>
            <person name="Bajic V.B."/>
            <person name="Brenner S.E."/>
            <person name="Batalov S."/>
            <person name="Forrest A.R."/>
            <person name="Zavolan M."/>
            <person name="Davis M.J."/>
            <person name="Wilming L.G."/>
            <person name="Aidinis V."/>
            <person name="Allen J.E."/>
            <person name="Ambesi-Impiombato A."/>
            <person name="Apweiler R."/>
            <person name="Aturaliya R.N."/>
            <person name="Bailey T.L."/>
            <person name="Bansal M."/>
            <person name="Baxter L."/>
            <person name="Beisel K.W."/>
            <person name="Bersano T."/>
            <person name="Bono H."/>
            <person name="Chalk A.M."/>
            <person name="Chiu K.P."/>
            <person name="Choudhary V."/>
            <person name="Christoffels A."/>
            <person name="Clutterbuck D.R."/>
            <person name="Crowe M.L."/>
            <person name="Dalla E."/>
            <person name="Dalrymple B.P."/>
            <person name="de Bono B."/>
            <person name="Della Gatta G."/>
            <person name="di Bernardo D."/>
            <person name="Down T."/>
            <person name="Engstrom P."/>
            <person name="Fagiolini M."/>
            <person name="Faulkner G."/>
            <person name="Fletcher C.F."/>
            <person name="Fukushima T."/>
            <person name="Furuno M."/>
            <person name="Futaki S."/>
            <person name="Gariboldi M."/>
            <person name="Georgii-Hemming P."/>
            <person name="Gingeras T.R."/>
            <person name="Gojobori T."/>
            <person name="Green R.E."/>
            <person name="Gustincich S."/>
            <person name="Harbers M."/>
            <person name="Hayashi Y."/>
            <person name="Hensch T.K."/>
            <person name="Hirokawa N."/>
            <person name="Hill D."/>
            <person name="Huminiecki L."/>
            <person name="Iacono M."/>
            <person name="Ikeo K."/>
            <person name="Iwama A."/>
            <person name="Ishikawa T."/>
            <person name="Jakt M."/>
            <person name="Kanapin A."/>
            <person name="Katoh M."/>
            <person name="Kawasawa Y."/>
            <person name="Kelso J."/>
            <person name="Kitamura H."/>
            <person name="Kitano H."/>
            <person name="Kollias G."/>
            <person name="Krishnan S.P."/>
            <person name="Kruger A."/>
            <person name="Kummerfeld S.K."/>
            <person name="Kurochkin I.V."/>
            <person name="Lareau L.F."/>
            <person name="Lazarevic D."/>
            <person name="Lipovich L."/>
            <person name="Liu J."/>
            <person name="Liuni S."/>
            <person name="McWilliam S."/>
            <person name="Madan Babu M."/>
            <person name="Madera M."/>
            <person name="Marchionni L."/>
            <person name="Matsuda H."/>
            <person name="Matsuzawa S."/>
            <person name="Miki H."/>
            <person name="Mignone F."/>
            <person name="Miyake S."/>
            <person name="Morris K."/>
            <person name="Mottagui-Tabar S."/>
            <person name="Mulder N."/>
            <person name="Nakano N."/>
            <person name="Nakauchi H."/>
            <person name="Ng P."/>
            <person name="Nilsson R."/>
            <person name="Nishiguchi S."/>
            <person name="Nishikawa S."/>
            <person name="Nori F."/>
            <person name="Ohara O."/>
            <person name="Okazaki Y."/>
            <person name="Orlando V."/>
            <person name="Pang K.C."/>
            <person name="Pavan W.J."/>
            <person name="Pavesi G."/>
            <person name="Pesole G."/>
            <person name="Petrovsky N."/>
            <person name="Piazza S."/>
            <person name="Reed J."/>
            <person name="Reid J.F."/>
            <person name="Ring B.Z."/>
            <person name="Ringwald M."/>
            <person name="Rost B."/>
            <person name="Ruan Y."/>
            <person name="Salzberg S.L."/>
            <person name="Sandelin A."/>
            <person name="Schneider C."/>
            <person name="Schoenbach C."/>
            <person name="Sekiguchi K."/>
            <person name="Semple C.A."/>
            <person name="Seno S."/>
            <person name="Sessa L."/>
            <person name="Sheng Y."/>
            <person name="Shibata Y."/>
            <person name="Shimada H."/>
            <person name="Shimada K."/>
            <person name="Silva D."/>
            <person name="Sinclair B."/>
            <person name="Sperling S."/>
            <person name="Stupka E."/>
            <person name="Sugiura K."/>
            <person name="Sultana R."/>
            <person name="Takenaka Y."/>
            <person name="Taki K."/>
            <person name="Tammoja K."/>
            <person name="Tan S.L."/>
            <person name="Tang S."/>
            <person name="Taylor M.S."/>
            <person name="Tegner J."/>
            <person name="Teichmann S.A."/>
            <person name="Ueda H.R."/>
            <person name="van Nimwegen E."/>
            <person name="Verardo R."/>
            <person name="Wei C.L."/>
            <person name="Yagi K."/>
            <person name="Yamanishi H."/>
            <person name="Zabarovsky E."/>
            <person name="Zhu S."/>
            <person name="Zimmer A."/>
            <person name="Hide W."/>
            <person name="Bult C."/>
            <person name="Grimmond S.M."/>
            <person name="Teasdale R.D."/>
            <person name="Liu E.T."/>
            <person name="Brusic V."/>
            <person name="Quackenbush J."/>
            <person name="Wahlestedt C."/>
            <person name="Mattick J.S."/>
            <person name="Hume D.A."/>
            <person name="Kai C."/>
            <person name="Sasaki D."/>
            <person name="Tomaru Y."/>
            <person name="Fukuda S."/>
            <person name="Kanamori-Katayama M."/>
            <person name="Suzuki M."/>
            <person name="Aoki J."/>
            <person name="Arakawa T."/>
            <person name="Iida J."/>
            <person name="Imamura K."/>
            <person name="Itoh M."/>
            <person name="Kato T."/>
            <person name="Kawaji H."/>
            <person name="Kawagashira N."/>
            <person name="Kawashima T."/>
            <person name="Kojima M."/>
            <person name="Kondo S."/>
            <person name="Konno H."/>
            <person name="Nakano K."/>
            <person name="Ninomiya N."/>
            <person name="Nishio T."/>
            <person name="Okada M."/>
            <person name="Plessy C."/>
            <person name="Shibata K."/>
            <person name="Shiraki T."/>
            <person name="Suzuki S."/>
            <person name="Tagami M."/>
            <person name="Waki K."/>
            <person name="Watahiki A."/>
            <person name="Okamura-Oho Y."/>
            <person name="Suzuki H."/>
            <person name="Kawai J."/>
            <person name="Hayashizaki Y."/>
        </authorList>
    </citation>
    <scope>NUCLEOTIDE SEQUENCE [LARGE SCALE MRNA] OF 33-575</scope>
    <source>
        <strain>C57BL/6J</strain>
        <tissue>Embryo</tissue>
        <tissue>Submandibular gland</tissue>
    </source>
</reference>
<reference key="4">
    <citation type="journal article" date="2010" name="Cell">
        <title>A tissue-specific atlas of mouse protein phosphorylation and expression.</title>
        <authorList>
            <person name="Huttlin E.L."/>
            <person name="Jedrychowski M.P."/>
            <person name="Elias J.E."/>
            <person name="Goswami T."/>
            <person name="Rad R."/>
            <person name="Beausoleil S.A."/>
            <person name="Villen J."/>
            <person name="Haas W."/>
            <person name="Sowa M.E."/>
            <person name="Gygi S.P."/>
        </authorList>
    </citation>
    <scope>PHOSPHORYLATION [LARGE SCALE ANALYSIS] AT SER-367</scope>
    <scope>IDENTIFICATION BY MASS SPECTROMETRY [LARGE SCALE ANALYSIS]</scope>
    <source>
        <tissue>Brain</tissue>
        <tissue>Brown adipose tissue</tissue>
        <tissue>Heart</tissue>
        <tissue>Kidney</tissue>
        <tissue>Liver</tissue>
        <tissue>Lung</tissue>
        <tissue>Pancreas</tissue>
        <tissue>Spleen</tissue>
        <tissue>Testis</tissue>
    </source>
</reference>
<reference key="5">
    <citation type="journal article" date="2013" name="Mol. Cell">
        <title>SIRT5-mediated lysine desuccinylation impacts diverse metabolic pathways.</title>
        <authorList>
            <person name="Park J."/>
            <person name="Chen Y."/>
            <person name="Tishkoff D.X."/>
            <person name="Peng C."/>
            <person name="Tan M."/>
            <person name="Dai L."/>
            <person name="Xie Z."/>
            <person name="Zhang Y."/>
            <person name="Zwaans B.M."/>
            <person name="Skinner M.E."/>
            <person name="Lombard D.B."/>
            <person name="Zhao Y."/>
        </authorList>
    </citation>
    <scope>ACETYLATION [LARGE SCALE ANALYSIS] AT LYS-21</scope>
    <scope>IDENTIFICATION BY MASS SPECTROMETRY [LARGE SCALE ANALYSIS]</scope>
    <source>
        <tissue>Embryonic fibroblast</tissue>
    </source>
</reference>
<reference key="6">
    <citation type="journal article" date="2020" name="Nat. Commun.">
        <title>REEP5 depletion causes sarco-endoplasmic reticulum vacuolization and cardiac functional defects.</title>
        <authorList>
            <person name="Lee S.H."/>
            <person name="Hadipour-Lakmehsari S."/>
            <person name="Murthy H.R."/>
            <person name="Gibb N."/>
            <person name="Miyake T."/>
            <person name="Teng A.C.T."/>
            <person name="Cosme J."/>
            <person name="Yu J.C."/>
            <person name="Moon M."/>
            <person name="Lim S."/>
            <person name="Wong V."/>
            <person name="Liu P."/>
            <person name="Billia F."/>
            <person name="Fernandez-Gonzalez R."/>
            <person name="Stagljar I."/>
            <person name="Sharma P."/>
            <person name="Kislinger T."/>
            <person name="Scott I.C."/>
            <person name="Gramolini A.O."/>
        </authorList>
    </citation>
    <scope>INTERACTION WITH REEP5</scope>
    <scope>SUBCELLULAR LOCATION</scope>
    <scope>TISSUE SPECIFICITY</scope>
</reference>
<proteinExistence type="evidence at protein level"/>
<gene>
    <name type="primary">Ckap4</name>
</gene>
<organism>
    <name type="scientific">Mus musculus</name>
    <name type="common">Mouse</name>
    <dbReference type="NCBI Taxonomy" id="10090"/>
    <lineage>
        <taxon>Eukaryota</taxon>
        <taxon>Metazoa</taxon>
        <taxon>Chordata</taxon>
        <taxon>Craniata</taxon>
        <taxon>Vertebrata</taxon>
        <taxon>Euteleostomi</taxon>
        <taxon>Mammalia</taxon>
        <taxon>Eutheria</taxon>
        <taxon>Euarchontoglires</taxon>
        <taxon>Glires</taxon>
        <taxon>Rodentia</taxon>
        <taxon>Myomorpha</taxon>
        <taxon>Muroidea</taxon>
        <taxon>Muridae</taxon>
        <taxon>Murinae</taxon>
        <taxon>Mus</taxon>
        <taxon>Mus</taxon>
    </lineage>
</organism>
<evidence type="ECO:0000250" key="1"/>
<evidence type="ECO:0000250" key="2">
    <source>
        <dbReference type="UniProtKB" id="Q07065"/>
    </source>
</evidence>
<evidence type="ECO:0000255" key="3"/>
<evidence type="ECO:0000256" key="4">
    <source>
        <dbReference type="SAM" id="MobiDB-lite"/>
    </source>
</evidence>
<evidence type="ECO:0000269" key="5">
    <source>
    </source>
</evidence>
<evidence type="ECO:0000305" key="6"/>
<evidence type="ECO:0007744" key="7">
    <source>
    </source>
</evidence>
<evidence type="ECO:0007744" key="8">
    <source>
    </source>
</evidence>
<keyword id="KW-0007">Acetylation</keyword>
<keyword id="KW-1003">Cell membrane</keyword>
<keyword id="KW-0175">Coiled coil</keyword>
<keyword id="KW-0963">Cytoplasm</keyword>
<keyword id="KW-0206">Cytoskeleton</keyword>
<keyword id="KW-0256">Endoplasmic reticulum</keyword>
<keyword id="KW-0449">Lipoprotein</keyword>
<keyword id="KW-0472">Membrane</keyword>
<keyword id="KW-0564">Palmitate</keyword>
<keyword id="KW-0597">Phosphoprotein</keyword>
<keyword id="KW-1185">Reference proteome</keyword>
<keyword id="KW-0735">Signal-anchor</keyword>
<keyword id="KW-0812">Transmembrane</keyword>
<keyword id="KW-1133">Transmembrane helix</keyword>
<feature type="chain" id="PRO_0000252418" description="Cytoskeleton-associated protein 4">
    <location>
        <begin position="1"/>
        <end position="575"/>
    </location>
</feature>
<feature type="topological domain" description="Cytoplasmic" evidence="3">
    <location>
        <begin position="1"/>
        <end position="85"/>
    </location>
</feature>
<feature type="transmembrane region" description="Helical" evidence="3">
    <location>
        <begin position="86"/>
        <end position="108"/>
    </location>
</feature>
<feature type="topological domain" description="Extracellular" evidence="3">
    <location>
        <begin position="109"/>
        <end position="575"/>
    </location>
</feature>
<feature type="region of interest" description="Disordered" evidence="4">
    <location>
        <begin position="1"/>
        <end position="73"/>
    </location>
</feature>
<feature type="coiled-coil region" evidence="3">
    <location>
        <begin position="125"/>
        <end position="193"/>
    </location>
</feature>
<feature type="coiled-coil region" evidence="3">
    <location>
        <begin position="236"/>
        <end position="438"/>
    </location>
</feature>
<feature type="coiled-coil region" evidence="3">
    <location>
        <begin position="507"/>
        <end position="575"/>
    </location>
</feature>
<feature type="compositionally biased region" description="Pro residues" evidence="4">
    <location>
        <begin position="37"/>
        <end position="53"/>
    </location>
</feature>
<feature type="modified residue" description="Phosphoserine" evidence="2">
    <location>
        <position position="3"/>
    </location>
</feature>
<feature type="modified residue" description="Phosphoserine" evidence="2">
    <location>
        <position position="17"/>
    </location>
</feature>
<feature type="modified residue" description="Phosphoserine" evidence="2">
    <location>
        <position position="19"/>
    </location>
</feature>
<feature type="modified residue" description="N6-acetyllysine" evidence="8">
    <location>
        <position position="21"/>
    </location>
</feature>
<feature type="modified residue" description="Phosphoserine" evidence="2">
    <location>
        <position position="211"/>
    </location>
</feature>
<feature type="modified residue" description="Phosphoserine" evidence="2">
    <location>
        <position position="292"/>
    </location>
</feature>
<feature type="modified residue" description="Phosphoserine" evidence="7">
    <location>
        <position position="367"/>
    </location>
</feature>
<feature type="lipid moiety-binding region" description="S-palmitoyl cysteine; by ZDHHC2" evidence="1">
    <location>
        <position position="79"/>
    </location>
</feature>
<feature type="sequence conflict" description="In Ref. 2; AAH25522." evidence="6" ref="2">
    <original>K</original>
    <variation>M</variation>
    <location>
        <position position="243"/>
    </location>
</feature>
<feature type="sequence conflict" description="In Ref. 3; BAC41005." evidence="6" ref="3">
    <original>M</original>
    <variation>I</variation>
    <location>
        <position position="281"/>
    </location>
</feature>
<dbReference type="EMBL" id="AC140333">
    <property type="status" value="NOT_ANNOTATED_CDS"/>
    <property type="molecule type" value="Genomic_DNA"/>
</dbReference>
<dbReference type="EMBL" id="AC150314">
    <property type="status" value="NOT_ANNOTATED_CDS"/>
    <property type="molecule type" value="Genomic_DNA"/>
</dbReference>
<dbReference type="EMBL" id="BC025522">
    <property type="protein sequence ID" value="AAH25522.1"/>
    <property type="status" value="ALT_INIT"/>
    <property type="molecule type" value="mRNA"/>
</dbReference>
<dbReference type="EMBL" id="BC138318">
    <property type="protein sequence ID" value="AAI38319.1"/>
    <property type="molecule type" value="mRNA"/>
</dbReference>
<dbReference type="EMBL" id="BC138320">
    <property type="protein sequence ID" value="AAI38321.1"/>
    <property type="molecule type" value="mRNA"/>
</dbReference>
<dbReference type="EMBL" id="AK030708">
    <property type="protein sequence ID" value="BAC27092.1"/>
    <property type="molecule type" value="mRNA"/>
</dbReference>
<dbReference type="EMBL" id="AK089935">
    <property type="protein sequence ID" value="BAC41005.1"/>
    <property type="status" value="ALT_INIT"/>
    <property type="molecule type" value="mRNA"/>
</dbReference>
<dbReference type="CCDS" id="CCDS24080.1"/>
<dbReference type="RefSeq" id="NP_780660.1">
    <property type="nucleotide sequence ID" value="NM_175451.1"/>
</dbReference>
<dbReference type="SMR" id="Q8BMK4"/>
<dbReference type="BioGRID" id="229721">
    <property type="interactions" value="16"/>
</dbReference>
<dbReference type="FunCoup" id="Q8BMK4">
    <property type="interactions" value="689"/>
</dbReference>
<dbReference type="IntAct" id="Q8BMK4">
    <property type="interactions" value="4"/>
</dbReference>
<dbReference type="MINT" id="Q8BMK4"/>
<dbReference type="STRING" id="10090.ENSMUSP00000050336"/>
<dbReference type="GlyGen" id="Q8BMK4">
    <property type="glycosylation" value="1 site, 1 O-linked glycan (1 site)"/>
</dbReference>
<dbReference type="iPTMnet" id="Q8BMK4"/>
<dbReference type="PhosphoSitePlus" id="Q8BMK4"/>
<dbReference type="SwissPalm" id="Q8BMK4"/>
<dbReference type="jPOST" id="Q8BMK4"/>
<dbReference type="PaxDb" id="10090-ENSMUSP00000050336"/>
<dbReference type="PeptideAtlas" id="Q8BMK4"/>
<dbReference type="ProteomicsDB" id="279091"/>
<dbReference type="Pumba" id="Q8BMK4"/>
<dbReference type="Antibodypedia" id="613">
    <property type="antibodies" value="299 antibodies from 34 providers"/>
</dbReference>
<dbReference type="DNASU" id="216197"/>
<dbReference type="Ensembl" id="ENSMUST00000053871.5">
    <property type="protein sequence ID" value="ENSMUSP00000050336.4"/>
    <property type="gene ID" value="ENSMUSG00000046841.7"/>
</dbReference>
<dbReference type="GeneID" id="216197"/>
<dbReference type="KEGG" id="mmu:216197"/>
<dbReference type="UCSC" id="uc007gkq.1">
    <property type="organism name" value="mouse"/>
</dbReference>
<dbReference type="AGR" id="MGI:2444926"/>
<dbReference type="CTD" id="10970"/>
<dbReference type="MGI" id="MGI:2444926">
    <property type="gene designation" value="Ckap4"/>
</dbReference>
<dbReference type="VEuPathDB" id="HostDB:ENSMUSG00000046841"/>
<dbReference type="eggNOG" id="ENOG502QVCP">
    <property type="taxonomic scope" value="Eukaryota"/>
</dbReference>
<dbReference type="GeneTree" id="ENSGT00390000015968"/>
<dbReference type="HOGENOM" id="CLU_032481_0_0_1"/>
<dbReference type="InParanoid" id="Q8BMK4"/>
<dbReference type="OMA" id="GFSGWCV"/>
<dbReference type="OrthoDB" id="9944809at2759"/>
<dbReference type="PhylomeDB" id="Q8BMK4"/>
<dbReference type="TreeFam" id="TF332395"/>
<dbReference type="Reactome" id="R-MMU-381426">
    <property type="pathway name" value="Regulation of Insulin-like Growth Factor (IGF) transport and uptake by Insulin-like Growth Factor Binding Proteins (IGFBPs)"/>
</dbReference>
<dbReference type="Reactome" id="R-MMU-5683826">
    <property type="pathway name" value="Surfactant metabolism"/>
</dbReference>
<dbReference type="Reactome" id="R-MMU-6798695">
    <property type="pathway name" value="Neutrophil degranulation"/>
</dbReference>
<dbReference type="Reactome" id="R-MMU-8957275">
    <property type="pathway name" value="Post-translational protein phosphorylation"/>
</dbReference>
<dbReference type="Reactome" id="R-MMU-9696264">
    <property type="pathway name" value="RND3 GTPase cycle"/>
</dbReference>
<dbReference type="Reactome" id="R-MMU-9696270">
    <property type="pathway name" value="RND2 GTPase cycle"/>
</dbReference>
<dbReference type="BioGRID-ORCS" id="216197">
    <property type="hits" value="1 hit in 79 CRISPR screens"/>
</dbReference>
<dbReference type="CD-CODE" id="CE726F99">
    <property type="entry name" value="Postsynaptic density"/>
</dbReference>
<dbReference type="ChiTaRS" id="Ckap4">
    <property type="organism name" value="mouse"/>
</dbReference>
<dbReference type="PRO" id="PR:Q8BMK4"/>
<dbReference type="Proteomes" id="UP000000589">
    <property type="component" value="Chromosome 10"/>
</dbReference>
<dbReference type="RNAct" id="Q8BMK4">
    <property type="molecule type" value="protein"/>
</dbReference>
<dbReference type="Bgee" id="ENSMUSG00000046841">
    <property type="expression patterns" value="Expressed in ascending aorta and 238 other cell types or tissues"/>
</dbReference>
<dbReference type="GO" id="GO:0009986">
    <property type="term" value="C:cell surface"/>
    <property type="evidence" value="ECO:0000266"/>
    <property type="project" value="MGI"/>
</dbReference>
<dbReference type="GO" id="GO:0005856">
    <property type="term" value="C:cytoskeleton"/>
    <property type="evidence" value="ECO:0007669"/>
    <property type="project" value="UniProtKB-SubCell"/>
</dbReference>
<dbReference type="GO" id="GO:0005783">
    <property type="term" value="C:endoplasmic reticulum"/>
    <property type="evidence" value="ECO:0000314"/>
    <property type="project" value="MGI"/>
</dbReference>
<dbReference type="GO" id="GO:0005789">
    <property type="term" value="C:endoplasmic reticulum membrane"/>
    <property type="evidence" value="ECO:0007669"/>
    <property type="project" value="UniProtKB-SubCell"/>
</dbReference>
<dbReference type="GO" id="GO:0005811">
    <property type="term" value="C:lipid droplet"/>
    <property type="evidence" value="ECO:0007669"/>
    <property type="project" value="Ensembl"/>
</dbReference>
<dbReference type="GO" id="GO:0005739">
    <property type="term" value="C:mitochondrion"/>
    <property type="evidence" value="ECO:0007669"/>
    <property type="project" value="Ensembl"/>
</dbReference>
<dbReference type="GO" id="GO:0016607">
    <property type="term" value="C:nuclear speck"/>
    <property type="evidence" value="ECO:0007669"/>
    <property type="project" value="Ensembl"/>
</dbReference>
<dbReference type="GO" id="GO:0048471">
    <property type="term" value="C:perinuclear region of cytoplasm"/>
    <property type="evidence" value="ECO:0007669"/>
    <property type="project" value="UniProtKB-SubCell"/>
</dbReference>
<dbReference type="GO" id="GO:0005886">
    <property type="term" value="C:plasma membrane"/>
    <property type="evidence" value="ECO:0007669"/>
    <property type="project" value="UniProtKB-SubCell"/>
</dbReference>
<dbReference type="GO" id="GO:0005791">
    <property type="term" value="C:rough endoplasmic reticulum"/>
    <property type="evidence" value="ECO:0007669"/>
    <property type="project" value="Ensembl"/>
</dbReference>
<dbReference type="Gene3D" id="1.20.58.60">
    <property type="match status" value="1"/>
</dbReference>
<dbReference type="PANTHER" id="PTHR45161">
    <property type="entry name" value="CYTOSKELETON-ASSOCIATED PROTEIN 4"/>
    <property type="match status" value="1"/>
</dbReference>
<dbReference type="PANTHER" id="PTHR45161:SF1">
    <property type="entry name" value="CYTOSKELETON-ASSOCIATED PROTEIN 4"/>
    <property type="match status" value="1"/>
</dbReference>
<dbReference type="SUPFAM" id="SSF57997">
    <property type="entry name" value="Tropomyosin"/>
    <property type="match status" value="1"/>
</dbReference>
<sequence length="575" mass="63692">MPSAKQRGSKGGHGAASPSDKGAHPSGGADDVAKKPPAAPQQPQPPAPHPPQHPQNQAHRGGHRGRSSAATANASSASCSRRLGRVLNFLFYLSLVAAAAFSGWYVHHVLEEVQQVRRGHQDFSRQRDELGQGLQGVEQKVQSLQATFGTFESLLRNSQHKQDLTEKAVKEGESELNRISEVLQKLQNEILKDLSDGIHVVKDARERDFTSLENTVEERLTELTKSINDNIAIFTDVQKRSQKEINEVKMKVASLEESKGDRSQDVKTLKDAVKEVQASMMSRERDIEALKSSLQTMESDVYTEVRELVSLKQEQQAFKQAADSERLALQALTEKLLRSEESSSRLPEDIRRLEEELQQLKVGAHGSEEGAVFKDSKALEELQRQIEGLGARLQYVEDGVYSMQVASARHTESLESLLSKSQEYEQRLAMLQEHVGNLGSSSDLASTVRSLGETQLALSSDLKELKQSLGELPGTVESLQEQVLSLLSQDQAQAEGLPPQDFLDRLSSLDNLKSSVSQVESDLKMLRTAVDSLVAYSVKIETNENNLESAKGLLDDLRNDLDRLFLKVEKIHEKI</sequence>